<protein>
    <recommendedName>
        <fullName>Low calcium response locus protein T</fullName>
    </recommendedName>
</protein>
<keyword id="KW-0614">Plasmid</keyword>
<feature type="chain" id="PRO_0000084379" description="Low calcium response locus protein T">
    <location>
        <begin position="1"/>
        <end position="140"/>
    </location>
</feature>
<evidence type="ECO:0000305" key="1"/>
<accession>Q00932</accession>
<accession>Q663H5</accession>
<name>LCRT_YERPS</name>
<proteinExistence type="predicted"/>
<sequence length="140" mass="16594">MTEYQASERRGCRIMGISRSLLHYCPNTARDIPVVEVLQKLAHQYPAYGFGLMFNKLRQSGLPWNVKRVYRVYRLLKLNFRRKGKKRLPNRHPQPLAIPLKMNHCWSVDFMSDALPDGRRFRLFNVVEILTGKHWQLKLT</sequence>
<reference key="1">
    <citation type="journal article" date="2004" name="Proc. Natl. Acad. Sci. U.S.A.">
        <title>Insights into the evolution of Yersinia pestis through whole-genome comparison with Yersinia pseudotuberculosis.</title>
        <authorList>
            <person name="Chain P.S.G."/>
            <person name="Carniel E."/>
            <person name="Larimer F.W."/>
            <person name="Lamerdin J."/>
            <person name="Stoutland P.O."/>
            <person name="Regala W.M."/>
            <person name="Georgescu A.M."/>
            <person name="Vergez L.M."/>
            <person name="Land M.L."/>
            <person name="Motin V.L."/>
            <person name="Brubaker R.R."/>
            <person name="Fowler J."/>
            <person name="Hinnebusch J."/>
            <person name="Marceau M."/>
            <person name="Medigue C."/>
            <person name="Simonet M."/>
            <person name="Chenal-Francisque V."/>
            <person name="Souza B."/>
            <person name="Dacheux D."/>
            <person name="Elliott J.M."/>
            <person name="Derbise A."/>
            <person name="Hauser L.J."/>
            <person name="Garcia E."/>
        </authorList>
    </citation>
    <scope>NUCLEOTIDE SEQUENCE [LARGE SCALE GENOMIC DNA]</scope>
    <source>
        <strain>IP32953</strain>
        <plasmid>pYV</plasmid>
    </source>
</reference>
<reference key="2">
    <citation type="journal article" date="1992" name="J. Bacteriol.">
        <title>A novel protein, LcrQ, involved in the low-calcium response of Yersinia pseudotuberculosis shows extensive homology to YopH.</title>
        <authorList>
            <person name="Rimpilaeinen M."/>
            <person name="Forsberg A."/>
            <person name="Wolf-Watz H."/>
        </authorList>
    </citation>
    <scope>NUCLEOTIDE SEQUENCE [GENOMIC DNA] OF 1-78</scope>
    <source>
        <strain>YPIII / Serotype O:3</strain>
        <plasmid>pIB1</plasmid>
    </source>
</reference>
<geneLocation type="plasmid">
    <name>pIB1</name>
</geneLocation>
<geneLocation type="plasmid">
    <name>pYV</name>
</geneLocation>
<dbReference type="EMBL" id="BX936399">
    <property type="protein sequence ID" value="CAF25434.1"/>
    <property type="molecule type" value="Genomic_DNA"/>
</dbReference>
<dbReference type="EMBL" id="M83986">
    <property type="protein sequence ID" value="AAA27656.1"/>
    <property type="status" value="ALT_FRAME"/>
    <property type="molecule type" value="Genomic_DNA"/>
</dbReference>
<dbReference type="KEGG" id="ypo:BZ17_4244"/>
<dbReference type="KEGG" id="yps:pYV0091"/>
<dbReference type="PATRIC" id="fig|273123.14.peg.4479"/>
<dbReference type="Proteomes" id="UP000001011">
    <property type="component" value="Plasmid pYV"/>
</dbReference>
<dbReference type="PANTHER" id="PTHR47515:SF2">
    <property type="entry name" value="INTEGRASE CORE DOMAIN PROTEIN"/>
    <property type="match status" value="1"/>
</dbReference>
<dbReference type="PANTHER" id="PTHR47515">
    <property type="entry name" value="LOW CALCIUM RESPONSE LOCUS PROTEIN T"/>
    <property type="match status" value="1"/>
</dbReference>
<gene>
    <name type="primary">lcrT</name>
    <name type="ordered locus">pYV0091</name>
</gene>
<comment type="sequence caution" evidence="1">
    <conflict type="frameshift">
        <sequence resource="EMBL-CDS" id="AAA27656"/>
    </conflict>
</comment>
<organism>
    <name type="scientific">Yersinia pseudotuberculosis serotype I (strain IP32953)</name>
    <dbReference type="NCBI Taxonomy" id="273123"/>
    <lineage>
        <taxon>Bacteria</taxon>
        <taxon>Pseudomonadati</taxon>
        <taxon>Pseudomonadota</taxon>
        <taxon>Gammaproteobacteria</taxon>
        <taxon>Enterobacterales</taxon>
        <taxon>Yersiniaceae</taxon>
        <taxon>Yersinia</taxon>
    </lineage>
</organism>